<name>MIAB_RICTY</name>
<accession>Q68VU1</accession>
<proteinExistence type="inferred from homology"/>
<feature type="chain" id="PRO_0000374510" description="tRNA-2-methylthio-N(6)-dimethylallyladenosine synthase">
    <location>
        <begin position="1"/>
        <end position="445"/>
    </location>
</feature>
<feature type="domain" description="MTTase N-terminal" evidence="1">
    <location>
        <begin position="3"/>
        <end position="124"/>
    </location>
</feature>
<feature type="domain" description="Radical SAM core" evidence="2">
    <location>
        <begin position="148"/>
        <end position="380"/>
    </location>
</feature>
<feature type="domain" description="TRAM" evidence="1">
    <location>
        <begin position="383"/>
        <end position="445"/>
    </location>
</feature>
<feature type="binding site" evidence="1">
    <location>
        <position position="12"/>
    </location>
    <ligand>
        <name>[4Fe-4S] cluster</name>
        <dbReference type="ChEBI" id="CHEBI:49883"/>
        <label>1</label>
    </ligand>
</feature>
<feature type="binding site" evidence="1">
    <location>
        <position position="48"/>
    </location>
    <ligand>
        <name>[4Fe-4S] cluster</name>
        <dbReference type="ChEBI" id="CHEBI:49883"/>
        <label>1</label>
    </ligand>
</feature>
<feature type="binding site" evidence="1">
    <location>
        <position position="87"/>
    </location>
    <ligand>
        <name>[4Fe-4S] cluster</name>
        <dbReference type="ChEBI" id="CHEBI:49883"/>
        <label>1</label>
    </ligand>
</feature>
<feature type="binding site" evidence="1">
    <location>
        <position position="162"/>
    </location>
    <ligand>
        <name>[4Fe-4S] cluster</name>
        <dbReference type="ChEBI" id="CHEBI:49883"/>
        <label>2</label>
        <note>4Fe-4S-S-AdoMet</note>
    </ligand>
</feature>
<feature type="binding site" evidence="1">
    <location>
        <position position="166"/>
    </location>
    <ligand>
        <name>[4Fe-4S] cluster</name>
        <dbReference type="ChEBI" id="CHEBI:49883"/>
        <label>2</label>
        <note>4Fe-4S-S-AdoMet</note>
    </ligand>
</feature>
<feature type="binding site" evidence="1">
    <location>
        <position position="169"/>
    </location>
    <ligand>
        <name>[4Fe-4S] cluster</name>
        <dbReference type="ChEBI" id="CHEBI:49883"/>
        <label>2</label>
        <note>4Fe-4S-S-AdoMet</note>
    </ligand>
</feature>
<sequence length="445" mass="50651">MSKKLYIKTYGCQMNVYDSVKIQDLLYPFGYESTEDIKEADIIILNTCHIREKAAEKTYSELGRIKKLQNTRKQEGLNPAIIVVAGCVAQAEGEVIFTRTPYVDIVVGPQSYYNLPELISKVVRHEKHLIDLDFVEEAKFDNLPEQLYTQGASSFISVQEGCDKFCTFCVVPYTRGAEFSRSVEQVYRESLKVVSNDTKEIILLGQNVNAYHGKGPKDKIFTLADLLKHLAQIPNLERLRYMTSHPIDMTDDLIKLHGTEPKLMPFLHLPVQSGSNKILKAMNRKHDRDYYFNIINRLREARSDIVLSSDFIVGFPGETEKDFEDTLDLVQRVKYGQCYSFKYSPRPGTPGAIRTDQIPEHIKSKRLTILQKELATQQLAFNESCVGSTMKVLFDRDGKFEDQIIGKTPYMQSVYIHNPNKSLLGKIVDVIITKAALNSLTGEIL</sequence>
<protein>
    <recommendedName>
        <fullName evidence="1">tRNA-2-methylthio-N(6)-dimethylallyladenosine synthase</fullName>
        <ecNumber evidence="1">2.8.4.3</ecNumber>
    </recommendedName>
    <alternativeName>
        <fullName evidence="1">(Dimethylallyl)adenosine tRNA methylthiotransferase MiaB</fullName>
    </alternativeName>
    <alternativeName>
        <fullName evidence="1">tRNA-i(6)A37 methylthiotransferase</fullName>
    </alternativeName>
</protein>
<organism>
    <name type="scientific">Rickettsia typhi (strain ATCC VR-144 / Wilmington)</name>
    <dbReference type="NCBI Taxonomy" id="257363"/>
    <lineage>
        <taxon>Bacteria</taxon>
        <taxon>Pseudomonadati</taxon>
        <taxon>Pseudomonadota</taxon>
        <taxon>Alphaproteobacteria</taxon>
        <taxon>Rickettsiales</taxon>
        <taxon>Rickettsiaceae</taxon>
        <taxon>Rickettsieae</taxon>
        <taxon>Rickettsia</taxon>
        <taxon>typhus group</taxon>
    </lineage>
</organism>
<dbReference type="EC" id="2.8.4.3" evidence="1"/>
<dbReference type="EMBL" id="AE017197">
    <property type="protein sequence ID" value="AAU04251.1"/>
    <property type="molecule type" value="Genomic_DNA"/>
</dbReference>
<dbReference type="RefSeq" id="WP_011191226.1">
    <property type="nucleotide sequence ID" value="NC_006142.1"/>
</dbReference>
<dbReference type="SMR" id="Q68VU1"/>
<dbReference type="KEGG" id="rty:RT0795"/>
<dbReference type="eggNOG" id="COG0621">
    <property type="taxonomic scope" value="Bacteria"/>
</dbReference>
<dbReference type="HOGENOM" id="CLU_018697_2_0_5"/>
<dbReference type="OrthoDB" id="9805215at2"/>
<dbReference type="Proteomes" id="UP000000604">
    <property type="component" value="Chromosome"/>
</dbReference>
<dbReference type="GO" id="GO:0005829">
    <property type="term" value="C:cytosol"/>
    <property type="evidence" value="ECO:0007669"/>
    <property type="project" value="TreeGrafter"/>
</dbReference>
<dbReference type="GO" id="GO:0051539">
    <property type="term" value="F:4 iron, 4 sulfur cluster binding"/>
    <property type="evidence" value="ECO:0007669"/>
    <property type="project" value="UniProtKB-UniRule"/>
</dbReference>
<dbReference type="GO" id="GO:0046872">
    <property type="term" value="F:metal ion binding"/>
    <property type="evidence" value="ECO:0007669"/>
    <property type="project" value="UniProtKB-KW"/>
</dbReference>
<dbReference type="GO" id="GO:0035597">
    <property type="term" value="F:N6-isopentenyladenosine methylthiotransferase activity"/>
    <property type="evidence" value="ECO:0007669"/>
    <property type="project" value="TreeGrafter"/>
</dbReference>
<dbReference type="CDD" id="cd01335">
    <property type="entry name" value="Radical_SAM"/>
    <property type="match status" value="1"/>
</dbReference>
<dbReference type="FunFam" id="3.40.50.12160:FF:000001">
    <property type="entry name" value="tRNA-2-methylthio-N(6)-dimethylallyladenosine synthase"/>
    <property type="match status" value="1"/>
</dbReference>
<dbReference type="FunFam" id="3.80.30.20:FF:000001">
    <property type="entry name" value="tRNA-2-methylthio-N(6)-dimethylallyladenosine synthase 2"/>
    <property type="match status" value="1"/>
</dbReference>
<dbReference type="Gene3D" id="3.40.50.12160">
    <property type="entry name" value="Methylthiotransferase, N-terminal domain"/>
    <property type="match status" value="1"/>
</dbReference>
<dbReference type="Gene3D" id="3.80.30.20">
    <property type="entry name" value="tm_1862 like domain"/>
    <property type="match status" value="1"/>
</dbReference>
<dbReference type="HAMAP" id="MF_01864">
    <property type="entry name" value="tRNA_metthiotr_MiaB"/>
    <property type="match status" value="1"/>
</dbReference>
<dbReference type="InterPro" id="IPR006638">
    <property type="entry name" value="Elp3/MiaA/NifB-like_rSAM"/>
</dbReference>
<dbReference type="InterPro" id="IPR005839">
    <property type="entry name" value="Methylthiotransferase"/>
</dbReference>
<dbReference type="InterPro" id="IPR020612">
    <property type="entry name" value="Methylthiotransferase_CS"/>
</dbReference>
<dbReference type="InterPro" id="IPR013848">
    <property type="entry name" value="Methylthiotransferase_N"/>
</dbReference>
<dbReference type="InterPro" id="IPR038135">
    <property type="entry name" value="Methylthiotransferase_N_sf"/>
</dbReference>
<dbReference type="InterPro" id="IPR006463">
    <property type="entry name" value="MiaB_methiolase"/>
</dbReference>
<dbReference type="InterPro" id="IPR007197">
    <property type="entry name" value="rSAM"/>
</dbReference>
<dbReference type="InterPro" id="IPR023404">
    <property type="entry name" value="rSAM_horseshoe"/>
</dbReference>
<dbReference type="InterPro" id="IPR002792">
    <property type="entry name" value="TRAM_dom"/>
</dbReference>
<dbReference type="NCBIfam" id="TIGR01574">
    <property type="entry name" value="miaB-methiolase"/>
    <property type="match status" value="1"/>
</dbReference>
<dbReference type="NCBIfam" id="TIGR00089">
    <property type="entry name" value="MiaB/RimO family radical SAM methylthiotransferase"/>
    <property type="match status" value="1"/>
</dbReference>
<dbReference type="PANTHER" id="PTHR43020">
    <property type="entry name" value="CDK5 REGULATORY SUBUNIT-ASSOCIATED PROTEIN 1"/>
    <property type="match status" value="1"/>
</dbReference>
<dbReference type="PANTHER" id="PTHR43020:SF2">
    <property type="entry name" value="MITOCHONDRIAL TRNA METHYLTHIOTRANSFERASE CDK5RAP1"/>
    <property type="match status" value="1"/>
</dbReference>
<dbReference type="Pfam" id="PF04055">
    <property type="entry name" value="Radical_SAM"/>
    <property type="match status" value="1"/>
</dbReference>
<dbReference type="Pfam" id="PF01938">
    <property type="entry name" value="TRAM"/>
    <property type="match status" value="1"/>
</dbReference>
<dbReference type="Pfam" id="PF00919">
    <property type="entry name" value="UPF0004"/>
    <property type="match status" value="1"/>
</dbReference>
<dbReference type="SFLD" id="SFLDF00273">
    <property type="entry name" value="(dimethylallyl)adenosine_tRNA"/>
    <property type="match status" value="1"/>
</dbReference>
<dbReference type="SFLD" id="SFLDG01082">
    <property type="entry name" value="B12-binding_domain_containing"/>
    <property type="match status" value="1"/>
</dbReference>
<dbReference type="SFLD" id="SFLDS00029">
    <property type="entry name" value="Radical_SAM"/>
    <property type="match status" value="1"/>
</dbReference>
<dbReference type="SMART" id="SM00729">
    <property type="entry name" value="Elp3"/>
    <property type="match status" value="1"/>
</dbReference>
<dbReference type="SUPFAM" id="SSF102114">
    <property type="entry name" value="Radical SAM enzymes"/>
    <property type="match status" value="1"/>
</dbReference>
<dbReference type="PROSITE" id="PS51449">
    <property type="entry name" value="MTTASE_N"/>
    <property type="match status" value="1"/>
</dbReference>
<dbReference type="PROSITE" id="PS01278">
    <property type="entry name" value="MTTASE_RADICAL"/>
    <property type="match status" value="1"/>
</dbReference>
<dbReference type="PROSITE" id="PS51918">
    <property type="entry name" value="RADICAL_SAM"/>
    <property type="match status" value="1"/>
</dbReference>
<dbReference type="PROSITE" id="PS50926">
    <property type="entry name" value="TRAM"/>
    <property type="match status" value="1"/>
</dbReference>
<evidence type="ECO:0000255" key="1">
    <source>
        <dbReference type="HAMAP-Rule" id="MF_01864"/>
    </source>
</evidence>
<evidence type="ECO:0000255" key="2">
    <source>
        <dbReference type="PROSITE-ProRule" id="PRU01266"/>
    </source>
</evidence>
<comment type="function">
    <text evidence="1">Catalyzes the methylthiolation of N6-(dimethylallyl)adenosine (i(6)A), leading to the formation of 2-methylthio-N6-(dimethylallyl)adenosine (ms(2)i(6)A) at position 37 in tRNAs that read codons beginning with uridine.</text>
</comment>
<comment type="catalytic activity">
    <reaction evidence="1">
        <text>N(6)-dimethylallyladenosine(37) in tRNA + (sulfur carrier)-SH + AH2 + 2 S-adenosyl-L-methionine = 2-methylsulfanyl-N(6)-dimethylallyladenosine(37) in tRNA + (sulfur carrier)-H + 5'-deoxyadenosine + L-methionine + A + S-adenosyl-L-homocysteine + 2 H(+)</text>
        <dbReference type="Rhea" id="RHEA:37067"/>
        <dbReference type="Rhea" id="RHEA-COMP:10375"/>
        <dbReference type="Rhea" id="RHEA-COMP:10376"/>
        <dbReference type="Rhea" id="RHEA-COMP:14737"/>
        <dbReference type="Rhea" id="RHEA-COMP:14739"/>
        <dbReference type="ChEBI" id="CHEBI:13193"/>
        <dbReference type="ChEBI" id="CHEBI:15378"/>
        <dbReference type="ChEBI" id="CHEBI:17319"/>
        <dbReference type="ChEBI" id="CHEBI:17499"/>
        <dbReference type="ChEBI" id="CHEBI:29917"/>
        <dbReference type="ChEBI" id="CHEBI:57844"/>
        <dbReference type="ChEBI" id="CHEBI:57856"/>
        <dbReference type="ChEBI" id="CHEBI:59789"/>
        <dbReference type="ChEBI" id="CHEBI:64428"/>
        <dbReference type="ChEBI" id="CHEBI:74415"/>
        <dbReference type="ChEBI" id="CHEBI:74417"/>
        <dbReference type="EC" id="2.8.4.3"/>
    </reaction>
</comment>
<comment type="cofactor">
    <cofactor evidence="1">
        <name>[4Fe-4S] cluster</name>
        <dbReference type="ChEBI" id="CHEBI:49883"/>
    </cofactor>
    <text evidence="1">Binds 2 [4Fe-4S] clusters. One cluster is coordinated with 3 cysteines and an exchangeable S-adenosyl-L-methionine.</text>
</comment>
<comment type="subunit">
    <text evidence="1">Monomer.</text>
</comment>
<comment type="subcellular location">
    <subcellularLocation>
        <location evidence="1">Cytoplasm</location>
    </subcellularLocation>
</comment>
<comment type="similarity">
    <text evidence="1">Belongs to the methylthiotransferase family. MiaB subfamily.</text>
</comment>
<gene>
    <name evidence="1" type="primary">miaB</name>
    <name type="ordered locus">RT0795</name>
</gene>
<keyword id="KW-0004">4Fe-4S</keyword>
<keyword id="KW-0963">Cytoplasm</keyword>
<keyword id="KW-0408">Iron</keyword>
<keyword id="KW-0411">Iron-sulfur</keyword>
<keyword id="KW-0479">Metal-binding</keyword>
<keyword id="KW-0949">S-adenosyl-L-methionine</keyword>
<keyword id="KW-0808">Transferase</keyword>
<keyword id="KW-0819">tRNA processing</keyword>
<reference key="1">
    <citation type="journal article" date="2004" name="J. Bacteriol.">
        <title>Complete genome sequence of Rickettsia typhi and comparison with sequences of other Rickettsiae.</title>
        <authorList>
            <person name="McLeod M.P."/>
            <person name="Qin X."/>
            <person name="Karpathy S.E."/>
            <person name="Gioia J."/>
            <person name="Highlander S.K."/>
            <person name="Fox G.E."/>
            <person name="McNeill T.Z."/>
            <person name="Jiang H."/>
            <person name="Muzny D."/>
            <person name="Jacob L.S."/>
            <person name="Hawes A.C."/>
            <person name="Sodergren E."/>
            <person name="Gill R."/>
            <person name="Hume J."/>
            <person name="Morgan M."/>
            <person name="Fan G."/>
            <person name="Amin A.G."/>
            <person name="Gibbs R.A."/>
            <person name="Hong C."/>
            <person name="Yu X.-J."/>
            <person name="Walker D.H."/>
            <person name="Weinstock G.M."/>
        </authorList>
    </citation>
    <scope>NUCLEOTIDE SEQUENCE [LARGE SCALE GENOMIC DNA]</scope>
    <source>
        <strain>ATCC VR-144 / Wilmington</strain>
    </source>
</reference>